<organism>
    <name type="scientific">Streptococcus thermophilus</name>
    <dbReference type="NCBI Taxonomy" id="1308"/>
    <lineage>
        <taxon>Bacteria</taxon>
        <taxon>Bacillati</taxon>
        <taxon>Bacillota</taxon>
        <taxon>Bacilli</taxon>
        <taxon>Lactobacillales</taxon>
        <taxon>Streptococcaceae</taxon>
        <taxon>Streptococcus</taxon>
    </lineage>
</organism>
<protein>
    <recommendedName>
        <fullName evidence="2">Purine nucleoside phosphorylase DeoD-type</fullName>
        <shortName evidence="2">PNP</shortName>
        <ecNumber evidence="2">2.4.2.1</ecNumber>
    </recommendedName>
</protein>
<reference key="1">
    <citation type="journal article" date="1996" name="J. Bacteriol.">
        <title>Identification and characterization of the eps (Exopolysaccharide) gene cluster from Streptococcus thermophilus Sfi6.</title>
        <authorList>
            <person name="Stingele F."/>
            <person name="Neeser J.R."/>
            <person name="Mollet B."/>
        </authorList>
    </citation>
    <scope>NUCLEOTIDE SEQUENCE [GENOMIC DNA]</scope>
    <source>
        <strain>Sfi6</strain>
    </source>
</reference>
<proteinExistence type="inferred from homology"/>
<evidence type="ECO:0000250" key="1">
    <source>
        <dbReference type="UniProtKB" id="P50389"/>
    </source>
</evidence>
<evidence type="ECO:0000255" key="2">
    <source>
        <dbReference type="HAMAP-Rule" id="MF_01627"/>
    </source>
</evidence>
<evidence type="ECO:0000305" key="3"/>
<keyword id="KW-0328">Glycosyltransferase</keyword>
<keyword id="KW-0808">Transferase</keyword>
<accession>Q56037</accession>
<sequence length="216" mass="24095">DPLRAKFIAENFLEDAVCFNEVRNMFGYTGTYKGERISVMGTGMGMPSISIYARELIVDYGVKKLIRVGTAGSLNENVHVRELVLAQAAATNSNIIRNDWPQYDFPQIASFNLLDKAYHIAKNFGMTTHVGNVLSSDEKYSNYFEKNIELGKWGVKAVEMEAAALYYLAAQHQVDALAIMTISDSLVNPDEDTTAEERQNTFTDMMKVGLETLIAD</sequence>
<gene>
    <name evidence="2" type="primary">deoD</name>
</gene>
<comment type="function">
    <text evidence="2">Catalyzes the reversible phosphorolytic breakdown of the N-glycosidic bond in the beta-(deoxy)ribonucleoside molecules, with the formation of the corresponding free purine bases and pentose-1-phosphate.</text>
</comment>
<comment type="catalytic activity">
    <reaction evidence="2">
        <text>a purine D-ribonucleoside + phosphate = a purine nucleobase + alpha-D-ribose 1-phosphate</text>
        <dbReference type="Rhea" id="RHEA:19805"/>
        <dbReference type="ChEBI" id="CHEBI:26386"/>
        <dbReference type="ChEBI" id="CHEBI:43474"/>
        <dbReference type="ChEBI" id="CHEBI:57720"/>
        <dbReference type="ChEBI" id="CHEBI:142355"/>
        <dbReference type="EC" id="2.4.2.1"/>
    </reaction>
</comment>
<comment type="catalytic activity">
    <reaction evidence="2">
        <text>a purine 2'-deoxy-D-ribonucleoside + phosphate = a purine nucleobase + 2-deoxy-alpha-D-ribose 1-phosphate</text>
        <dbReference type="Rhea" id="RHEA:36431"/>
        <dbReference type="ChEBI" id="CHEBI:26386"/>
        <dbReference type="ChEBI" id="CHEBI:43474"/>
        <dbReference type="ChEBI" id="CHEBI:57259"/>
        <dbReference type="ChEBI" id="CHEBI:142361"/>
        <dbReference type="EC" id="2.4.2.1"/>
    </reaction>
</comment>
<comment type="subunit">
    <text evidence="2">Homohexamer; trimer of homodimers.</text>
</comment>
<comment type="similarity">
    <text evidence="2 3">Belongs to the PNP/UDP phosphorylase family.</text>
</comment>
<name>DEOD_STRTR</name>
<feature type="chain" id="PRO_0000063166" description="Purine nucleoside phosphorylase DeoD-type">
    <location>
        <begin position="1" status="less than"/>
        <end position="216"/>
    </location>
</feature>
<feature type="active site" description="Proton donor" evidence="2">
    <location>
        <position position="184"/>
    </location>
</feature>
<feature type="binding site" description="in other chain" evidence="1">
    <location>
        <position position="4"/>
    </location>
    <ligand>
        <name>phosphate</name>
        <dbReference type="ChEBI" id="CHEBI:43474"/>
        <note>ligand shared between dimeric partners</note>
    </ligand>
</feature>
<feature type="binding site" evidence="1">
    <location>
        <position position="23"/>
    </location>
    <ligand>
        <name>phosphate</name>
        <dbReference type="ChEBI" id="CHEBI:43474"/>
        <note>ligand shared between dimeric partners</note>
    </ligand>
</feature>
<feature type="binding site" description="in other chain" evidence="1">
    <location>
        <begin position="67"/>
        <end position="70"/>
    </location>
    <ligand>
        <name>phosphate</name>
        <dbReference type="ChEBI" id="CHEBI:43474"/>
        <note>ligand shared between dimeric partners</note>
    </ligand>
</feature>
<feature type="binding site" evidence="1">
    <location>
        <begin position="159"/>
        <end position="161"/>
    </location>
    <ligand>
        <name>a purine D-ribonucleoside</name>
        <dbReference type="ChEBI" id="CHEBI:142355"/>
    </ligand>
</feature>
<feature type="binding site" evidence="1">
    <location>
        <begin position="183"/>
        <end position="184"/>
    </location>
    <ligand>
        <name>a purine D-ribonucleoside</name>
        <dbReference type="ChEBI" id="CHEBI:142355"/>
    </ligand>
</feature>
<feature type="site" description="Important for catalytic activity" evidence="2">
    <location>
        <position position="198"/>
    </location>
</feature>
<feature type="non-terminal residue">
    <location>
        <position position="1"/>
    </location>
</feature>
<dbReference type="EC" id="2.4.2.1" evidence="2"/>
<dbReference type="EMBL" id="U40830">
    <property type="protein sequence ID" value="AAC44007.1"/>
    <property type="molecule type" value="Genomic_DNA"/>
</dbReference>
<dbReference type="SMR" id="Q56037"/>
<dbReference type="eggNOG" id="COG0813">
    <property type="taxonomic scope" value="Bacteria"/>
</dbReference>
<dbReference type="GO" id="GO:0005829">
    <property type="term" value="C:cytosol"/>
    <property type="evidence" value="ECO:0007669"/>
    <property type="project" value="TreeGrafter"/>
</dbReference>
<dbReference type="GO" id="GO:0004731">
    <property type="term" value="F:purine-nucleoside phosphorylase activity"/>
    <property type="evidence" value="ECO:0007669"/>
    <property type="project" value="UniProtKB-EC"/>
</dbReference>
<dbReference type="GO" id="GO:0006152">
    <property type="term" value="P:purine nucleoside catabolic process"/>
    <property type="evidence" value="ECO:0007669"/>
    <property type="project" value="TreeGrafter"/>
</dbReference>
<dbReference type="CDD" id="cd09006">
    <property type="entry name" value="PNP_EcPNPI-like"/>
    <property type="match status" value="1"/>
</dbReference>
<dbReference type="Gene3D" id="3.40.50.1580">
    <property type="entry name" value="Nucleoside phosphorylase domain"/>
    <property type="match status" value="1"/>
</dbReference>
<dbReference type="InterPro" id="IPR004402">
    <property type="entry name" value="DeoD-type"/>
</dbReference>
<dbReference type="InterPro" id="IPR018016">
    <property type="entry name" value="Nucleoside_phosphorylase_CS"/>
</dbReference>
<dbReference type="InterPro" id="IPR000845">
    <property type="entry name" value="Nucleoside_phosphorylase_d"/>
</dbReference>
<dbReference type="InterPro" id="IPR035994">
    <property type="entry name" value="Nucleoside_phosphorylase_sf"/>
</dbReference>
<dbReference type="NCBIfam" id="TIGR00107">
    <property type="entry name" value="deoD"/>
    <property type="match status" value="1"/>
</dbReference>
<dbReference type="NCBIfam" id="NF004489">
    <property type="entry name" value="PRK05819.1"/>
    <property type="match status" value="1"/>
</dbReference>
<dbReference type="PANTHER" id="PTHR43691:SF11">
    <property type="entry name" value="FI09636P-RELATED"/>
    <property type="match status" value="1"/>
</dbReference>
<dbReference type="PANTHER" id="PTHR43691">
    <property type="entry name" value="URIDINE PHOSPHORYLASE"/>
    <property type="match status" value="1"/>
</dbReference>
<dbReference type="Pfam" id="PF01048">
    <property type="entry name" value="PNP_UDP_1"/>
    <property type="match status" value="1"/>
</dbReference>
<dbReference type="SUPFAM" id="SSF53167">
    <property type="entry name" value="Purine and uridine phosphorylases"/>
    <property type="match status" value="1"/>
</dbReference>
<dbReference type="PROSITE" id="PS01232">
    <property type="entry name" value="PNP_UDP_1"/>
    <property type="match status" value="1"/>
</dbReference>